<evidence type="ECO:0000250" key="1">
    <source>
        <dbReference type="UniProtKB" id="Q2FXT0"/>
    </source>
</evidence>
<evidence type="ECO:0000255" key="2">
    <source>
        <dbReference type="HAMAP-Rule" id="MF_00539"/>
    </source>
</evidence>
<evidence type="ECO:0000256" key="3">
    <source>
        <dbReference type="SAM" id="MobiDB-lite"/>
    </source>
</evidence>
<evidence type="ECO:0000305" key="4"/>
<name>RL27_BACAA</name>
<organism>
    <name type="scientific">Bacillus anthracis (strain A0248)</name>
    <dbReference type="NCBI Taxonomy" id="592021"/>
    <lineage>
        <taxon>Bacteria</taxon>
        <taxon>Bacillati</taxon>
        <taxon>Bacillota</taxon>
        <taxon>Bacilli</taxon>
        <taxon>Bacillales</taxon>
        <taxon>Bacillaceae</taxon>
        <taxon>Bacillus</taxon>
        <taxon>Bacillus cereus group</taxon>
    </lineage>
</organism>
<sequence length="96" mass="10491">MLRLDLQFFASKKGVGSTKNGRDSQSKRLGAKRADGQTVSGGSILYRQRGTKIYPGVNVGRGGDDTLYAKVDGVVRFERLGRDRKQVSVYPVAQEA</sequence>
<reference key="1">
    <citation type="submission" date="2009-04" db="EMBL/GenBank/DDBJ databases">
        <title>Genome sequence of Bacillus anthracis A0248.</title>
        <authorList>
            <person name="Dodson R.J."/>
            <person name="Munk A.C."/>
            <person name="Bruce D."/>
            <person name="Detter C."/>
            <person name="Tapia R."/>
            <person name="Sutton G."/>
            <person name="Sims D."/>
            <person name="Brettin T."/>
        </authorList>
    </citation>
    <scope>NUCLEOTIDE SEQUENCE [LARGE SCALE GENOMIC DNA]</scope>
    <source>
        <strain>A0248</strain>
    </source>
</reference>
<dbReference type="EMBL" id="CP001598">
    <property type="protein sequence ID" value="ACQ46850.1"/>
    <property type="molecule type" value="Genomic_DNA"/>
</dbReference>
<dbReference type="RefSeq" id="WP_000944957.1">
    <property type="nucleotide sequence ID" value="NC_012659.1"/>
</dbReference>
<dbReference type="SMR" id="C3P9C8"/>
<dbReference type="GeneID" id="92884982"/>
<dbReference type="KEGG" id="bai:BAA_4692"/>
<dbReference type="HOGENOM" id="CLU_095424_4_0_9"/>
<dbReference type="GO" id="GO:0022625">
    <property type="term" value="C:cytosolic large ribosomal subunit"/>
    <property type="evidence" value="ECO:0007669"/>
    <property type="project" value="TreeGrafter"/>
</dbReference>
<dbReference type="GO" id="GO:0003735">
    <property type="term" value="F:structural constituent of ribosome"/>
    <property type="evidence" value="ECO:0007669"/>
    <property type="project" value="InterPro"/>
</dbReference>
<dbReference type="GO" id="GO:0006412">
    <property type="term" value="P:translation"/>
    <property type="evidence" value="ECO:0007669"/>
    <property type="project" value="UniProtKB-UniRule"/>
</dbReference>
<dbReference type="FunFam" id="2.40.50.100:FF:000004">
    <property type="entry name" value="50S ribosomal protein L27"/>
    <property type="match status" value="1"/>
</dbReference>
<dbReference type="Gene3D" id="2.40.50.100">
    <property type="match status" value="1"/>
</dbReference>
<dbReference type="HAMAP" id="MF_00539">
    <property type="entry name" value="Ribosomal_bL27"/>
    <property type="match status" value="1"/>
</dbReference>
<dbReference type="InterPro" id="IPR001684">
    <property type="entry name" value="Ribosomal_bL27"/>
</dbReference>
<dbReference type="InterPro" id="IPR018261">
    <property type="entry name" value="Ribosomal_bL27_CS"/>
</dbReference>
<dbReference type="NCBIfam" id="TIGR00062">
    <property type="entry name" value="L27"/>
    <property type="match status" value="1"/>
</dbReference>
<dbReference type="PANTHER" id="PTHR15893:SF0">
    <property type="entry name" value="LARGE RIBOSOMAL SUBUNIT PROTEIN BL27M"/>
    <property type="match status" value="1"/>
</dbReference>
<dbReference type="PANTHER" id="PTHR15893">
    <property type="entry name" value="RIBOSOMAL PROTEIN L27"/>
    <property type="match status" value="1"/>
</dbReference>
<dbReference type="Pfam" id="PF01016">
    <property type="entry name" value="Ribosomal_L27"/>
    <property type="match status" value="1"/>
</dbReference>
<dbReference type="PRINTS" id="PR00063">
    <property type="entry name" value="RIBOSOMALL27"/>
</dbReference>
<dbReference type="SUPFAM" id="SSF110324">
    <property type="entry name" value="Ribosomal L27 protein-like"/>
    <property type="match status" value="1"/>
</dbReference>
<dbReference type="PROSITE" id="PS00831">
    <property type="entry name" value="RIBOSOMAL_L27"/>
    <property type="match status" value="1"/>
</dbReference>
<accession>C3P9C8</accession>
<keyword id="KW-0687">Ribonucleoprotein</keyword>
<keyword id="KW-0689">Ribosomal protein</keyword>
<comment type="PTM">
    <text evidence="1">The N-terminus is cleaved by ribosomal processing cysteine protease Prp.</text>
</comment>
<comment type="similarity">
    <text evidence="2">Belongs to the bacterial ribosomal protein bL27 family.</text>
</comment>
<proteinExistence type="inferred from homology"/>
<feature type="propeptide" id="PRO_0000459848" evidence="1">
    <location>
        <begin position="1"/>
        <end position="9"/>
    </location>
</feature>
<feature type="chain" id="PRO_1000195874" description="Large ribosomal subunit protein bL27">
    <location>
        <begin position="10"/>
        <end position="96"/>
    </location>
</feature>
<feature type="region of interest" description="Disordered" evidence="3">
    <location>
        <begin position="14"/>
        <end position="36"/>
    </location>
</feature>
<protein>
    <recommendedName>
        <fullName evidence="2">Large ribosomal subunit protein bL27</fullName>
    </recommendedName>
    <alternativeName>
        <fullName evidence="4">50S ribosomal protein L27</fullName>
    </alternativeName>
</protein>
<gene>
    <name evidence="2" type="primary">rpmA</name>
    <name type="ordered locus">BAA_4692</name>
</gene>